<feature type="chain" id="PRO_1000130738" description="Nucleotide-binding protein Bphy_0322">
    <location>
        <begin position="1"/>
        <end position="297"/>
    </location>
</feature>
<feature type="binding site" evidence="1">
    <location>
        <begin position="8"/>
        <end position="15"/>
    </location>
    <ligand>
        <name>ATP</name>
        <dbReference type="ChEBI" id="CHEBI:30616"/>
    </ligand>
</feature>
<feature type="binding site" evidence="1">
    <location>
        <begin position="57"/>
        <end position="60"/>
    </location>
    <ligand>
        <name>GTP</name>
        <dbReference type="ChEBI" id="CHEBI:37565"/>
    </ligand>
</feature>
<comment type="function">
    <text evidence="1">Displays ATPase and GTPase activities.</text>
</comment>
<comment type="similarity">
    <text evidence="1">Belongs to the RapZ-like family.</text>
</comment>
<sequence>MRIILITGISGSGKSVALNALEDAGYYCVDNLPPRFLPELATYLAGDGKDRLAVAIDARSGASLDDMPQMIRDLSGQHDVRVLFLNASTQALIQRFSETRRRHPLSGSPAHDADVGLLTSLAEAIERERELVAGLAEFGHQIDTSNLRANVLRMWVKRFIEQEHTGLALMFESFGFKRGVPLDADFVFDVRTLPNPYYDRELRPLTGLDRPVIDFLEALPVVQQMMGDIESFLQKWLPGFRDDNRSYLTVAIGCTGGQHRSVFIAETLAARFASEGNVIVRHRDAPIDVDDSSKLVA</sequence>
<gene>
    <name type="ordered locus">Bphy_0322</name>
</gene>
<proteinExistence type="inferred from homology"/>
<organism>
    <name type="scientific">Paraburkholderia phymatum (strain DSM 17167 / CIP 108236 / LMG 21445 / STM815)</name>
    <name type="common">Burkholderia phymatum</name>
    <dbReference type="NCBI Taxonomy" id="391038"/>
    <lineage>
        <taxon>Bacteria</taxon>
        <taxon>Pseudomonadati</taxon>
        <taxon>Pseudomonadota</taxon>
        <taxon>Betaproteobacteria</taxon>
        <taxon>Burkholderiales</taxon>
        <taxon>Burkholderiaceae</taxon>
        <taxon>Paraburkholderia</taxon>
    </lineage>
</organism>
<name>Y322_PARP8</name>
<accession>B2JCP6</accession>
<dbReference type="EMBL" id="CP001043">
    <property type="protein sequence ID" value="ACC69515.1"/>
    <property type="molecule type" value="Genomic_DNA"/>
</dbReference>
<dbReference type="RefSeq" id="WP_012399742.1">
    <property type="nucleotide sequence ID" value="NC_010622.1"/>
</dbReference>
<dbReference type="SMR" id="B2JCP6"/>
<dbReference type="STRING" id="391038.Bphy_0322"/>
<dbReference type="KEGG" id="bph:Bphy_0322"/>
<dbReference type="eggNOG" id="COG1660">
    <property type="taxonomic scope" value="Bacteria"/>
</dbReference>
<dbReference type="HOGENOM" id="CLU_059558_1_1_4"/>
<dbReference type="OrthoDB" id="9784461at2"/>
<dbReference type="Proteomes" id="UP000001192">
    <property type="component" value="Chromosome 1"/>
</dbReference>
<dbReference type="GO" id="GO:0005524">
    <property type="term" value="F:ATP binding"/>
    <property type="evidence" value="ECO:0007669"/>
    <property type="project" value="UniProtKB-UniRule"/>
</dbReference>
<dbReference type="GO" id="GO:0005525">
    <property type="term" value="F:GTP binding"/>
    <property type="evidence" value="ECO:0007669"/>
    <property type="project" value="UniProtKB-UniRule"/>
</dbReference>
<dbReference type="HAMAP" id="MF_00636">
    <property type="entry name" value="RapZ_like"/>
    <property type="match status" value="1"/>
</dbReference>
<dbReference type="InterPro" id="IPR027417">
    <property type="entry name" value="P-loop_NTPase"/>
</dbReference>
<dbReference type="InterPro" id="IPR005337">
    <property type="entry name" value="RapZ-like"/>
</dbReference>
<dbReference type="InterPro" id="IPR053930">
    <property type="entry name" value="RapZ-like_N"/>
</dbReference>
<dbReference type="InterPro" id="IPR053931">
    <property type="entry name" value="RapZ_C"/>
</dbReference>
<dbReference type="NCBIfam" id="NF003828">
    <property type="entry name" value="PRK05416.1"/>
    <property type="match status" value="1"/>
</dbReference>
<dbReference type="PANTHER" id="PTHR30448">
    <property type="entry name" value="RNASE ADAPTER PROTEIN RAPZ"/>
    <property type="match status" value="1"/>
</dbReference>
<dbReference type="PANTHER" id="PTHR30448:SF0">
    <property type="entry name" value="RNASE ADAPTER PROTEIN RAPZ"/>
    <property type="match status" value="1"/>
</dbReference>
<dbReference type="Pfam" id="PF22740">
    <property type="entry name" value="PapZ_C"/>
    <property type="match status" value="1"/>
</dbReference>
<dbReference type="Pfam" id="PF03668">
    <property type="entry name" value="RapZ-like_N"/>
    <property type="match status" value="1"/>
</dbReference>
<dbReference type="PIRSF" id="PIRSF005052">
    <property type="entry name" value="P-loopkin"/>
    <property type="match status" value="1"/>
</dbReference>
<dbReference type="SUPFAM" id="SSF52540">
    <property type="entry name" value="P-loop containing nucleoside triphosphate hydrolases"/>
    <property type="match status" value="1"/>
</dbReference>
<keyword id="KW-0067">ATP-binding</keyword>
<keyword id="KW-0342">GTP-binding</keyword>
<keyword id="KW-0547">Nucleotide-binding</keyword>
<keyword id="KW-1185">Reference proteome</keyword>
<protein>
    <recommendedName>
        <fullName evidence="1">Nucleotide-binding protein Bphy_0322</fullName>
    </recommendedName>
</protein>
<reference key="1">
    <citation type="journal article" date="2014" name="Stand. Genomic Sci.">
        <title>Complete genome sequence of Burkholderia phymatum STM815(T), a broad host range and efficient nitrogen-fixing symbiont of Mimosa species.</title>
        <authorList>
            <person name="Moulin L."/>
            <person name="Klonowska A."/>
            <person name="Caroline B."/>
            <person name="Booth K."/>
            <person name="Vriezen J.A."/>
            <person name="Melkonian R."/>
            <person name="James E.K."/>
            <person name="Young J.P."/>
            <person name="Bena G."/>
            <person name="Hauser L."/>
            <person name="Land M."/>
            <person name="Kyrpides N."/>
            <person name="Bruce D."/>
            <person name="Chain P."/>
            <person name="Copeland A."/>
            <person name="Pitluck S."/>
            <person name="Woyke T."/>
            <person name="Lizotte-Waniewski M."/>
            <person name="Bristow J."/>
            <person name="Riley M."/>
        </authorList>
    </citation>
    <scope>NUCLEOTIDE SEQUENCE [LARGE SCALE GENOMIC DNA]</scope>
    <source>
        <strain>DSM 17167 / CIP 108236 / LMG 21445 / STM815</strain>
    </source>
</reference>
<evidence type="ECO:0000255" key="1">
    <source>
        <dbReference type="HAMAP-Rule" id="MF_00636"/>
    </source>
</evidence>